<comment type="function">
    <text evidence="11 12">Exocellobiohydrolases (CBH) that catalyzes the hydrolysis of 1,4-beta-D-glucosidic bonds in cellulose to release the disaccharide cellobiose (Ref.4). The degradation of cellulose involves an interplay between different cellulolytic enzymes. Hydrolysis starts with endoglucanases (EGs), which cut internal beta-1,4-glucosidic bonds in cellulose to reduce the polymerization degree of the substrate and create new chain ends for exocellobiohydrolases (CBHs). The CBHs release the disaccharide cellobiose from the non-reducing end of the cellulose polymer chain. Finally, beta-1,4-glucosidases hydrolyze the cellobiose and other short cello-oligosaccharides into glucose units (Probable).</text>
</comment>
<comment type="catalytic activity">
    <reaction evidence="11">
        <text>Hydrolysis of (1-&gt;4)-beta-D-glucosidic linkages in cellulose and cellotetraose, releasing cellobiose from the non-reducing ends of the chains.</text>
        <dbReference type="EC" id="3.2.1.91"/>
    </reaction>
</comment>
<comment type="subcellular location">
    <subcellularLocation>
        <location evidence="11">Secreted</location>
    </subcellularLocation>
</comment>
<comment type="domain">
    <text evidence="13 15">The enzyme consists of two functional domains, a catalytic core joined to a carbohydrate-binding domain (CBM) by a serine-, threonine-, and proline-rich, highly glycosylated linker sequence.</text>
</comment>
<comment type="PTM">
    <text evidence="9">N-glycosylated. The catalytic core domain comprises three N-linked glycans which each consist of a single N-acetylglucosamine residue.</text>
</comment>
<comment type="PTM">
    <text evidence="9 13">O-glycosylated. Within the linker domain, all 8 threonines are variably glycosylated with between at least one, and up to three, mannose residues per site. All serines in this domain are at least partially glycosylated with a single mannose residue (PubMed:9746354). O-glycosylation of the cellulase linker provides protection from proteolysis. Linker glycans also contribute to binding affinity of cellobiohydrolases to cellulose (Probable).</text>
</comment>
<comment type="miscellaneous">
    <text>T.reesei produces two different exocellobiohydrolases. They are unique in that they can hydrolyze crystalline cellulose in the absence of endoglucanases.</text>
</comment>
<comment type="similarity">
    <text evidence="12">Belongs to the glycosyl hydrolase 7 (cellulase C) family.</text>
</comment>
<feature type="signal peptide" evidence="10 11">
    <location>
        <begin position="1"/>
        <end position="17"/>
    </location>
</feature>
<feature type="chain" id="PRO_0000007927" description="Exoglucanase 1">
    <location>
        <begin position="18"/>
        <end position="513"/>
    </location>
</feature>
<feature type="domain" description="CBM1" evidence="1">
    <location>
        <begin position="477"/>
        <end position="513"/>
    </location>
</feature>
<feature type="region of interest" description="Catalytic" evidence="14">
    <location>
        <begin position="18"/>
        <end position="453"/>
    </location>
</feature>
<feature type="region of interest" description="Disordered" evidence="2">
    <location>
        <begin position="401"/>
        <end position="480"/>
    </location>
</feature>
<feature type="region of interest" description="Linker" evidence="12">
    <location>
        <begin position="454"/>
        <end position="477"/>
    </location>
</feature>
<feature type="compositionally biased region" description="Polar residues" evidence="2">
    <location>
        <begin position="401"/>
        <end position="437"/>
    </location>
</feature>
<feature type="compositionally biased region" description="Gly residues" evidence="2">
    <location>
        <begin position="449"/>
        <end position="459"/>
    </location>
</feature>
<feature type="compositionally biased region" description="Low complexity" evidence="2">
    <location>
        <begin position="460"/>
        <end position="478"/>
    </location>
</feature>
<feature type="active site" description="Nucleophile" evidence="3 14">
    <location>
        <position position="229"/>
    </location>
</feature>
<feature type="active site" description="Proton donor/acceptor" evidence="3 14">
    <location>
        <position position="234"/>
    </location>
</feature>
<feature type="site" description="Not glycosylated" evidence="9">
    <location>
        <position position="81"/>
    </location>
</feature>
<feature type="modified residue" description="Pyrrolidone carboxylic acid" evidence="10 11 16 17 18">
    <location>
        <position position="18"/>
    </location>
</feature>
<feature type="glycosylation site" description="N-linked (GlcNAc) asparagine" evidence="9">
    <location>
        <position position="62"/>
    </location>
</feature>
<feature type="glycosylation site" description="N-linked (GlcNAc) asparagine" evidence="3 6 8 9">
    <location>
        <position position="287"/>
    </location>
</feature>
<feature type="glycosylation site" description="N-linked (GlcNAc) asparagine" evidence="3 8 9">
    <location>
        <position position="401"/>
    </location>
</feature>
<feature type="glycosylation site" description="O-linked (Man) threonine" evidence="9">
    <location>
        <position position="461"/>
    </location>
</feature>
<feature type="glycosylation site" description="O-linked (Man...) threonine" evidence="9">
    <location>
        <position position="462"/>
    </location>
</feature>
<feature type="glycosylation site" description="O-linked (Man...) threonine" evidence="9">
    <location>
        <position position="463"/>
    </location>
</feature>
<feature type="glycosylation site" description="O-linked (Man...) threonine" evidence="9">
    <location>
        <position position="464"/>
    </location>
</feature>
<feature type="glycosylation site" description="O-linked (Man) threonine" evidence="9">
    <location>
        <position position="469"/>
    </location>
</feature>
<feature type="glycosylation site" description="O-linked (Man...) threonine" evidence="9">
    <location>
        <position position="470"/>
    </location>
</feature>
<feature type="glycosylation site" description="O-linked (Man...) threonine" evidence="9">
    <location>
        <position position="471"/>
    </location>
</feature>
<feature type="glycosylation site" description="O-linked (Man) serine" evidence="9">
    <location>
        <position position="473"/>
    </location>
</feature>
<feature type="glycosylation site" description="O-linked (Man) serine" evidence="9">
    <location>
        <position position="474"/>
    </location>
</feature>
<feature type="glycosylation site" description="O-linked (Man) threonine" evidence="5 9">
    <location>
        <position position="478"/>
    </location>
</feature>
<feature type="glycosylation site" description="O-linked (Man) serine" evidence="5 9">
    <location>
        <position position="480"/>
    </location>
</feature>
<feature type="glycosylation site" description="O-linked (Man) serine" evidence="5">
    <location>
        <position position="491"/>
    </location>
</feature>
<feature type="disulfide bond" evidence="3 6 8">
    <location>
        <begin position="21"/>
        <end position="89"/>
    </location>
</feature>
<feature type="disulfide bond" evidence="3 6 8">
    <location>
        <begin position="36"/>
        <end position="42"/>
    </location>
</feature>
<feature type="disulfide bond" evidence="3 6 8">
    <location>
        <begin position="67"/>
        <end position="88"/>
    </location>
</feature>
<feature type="disulfide bond" evidence="3 6 8">
    <location>
        <begin position="78"/>
        <end position="84"/>
    </location>
</feature>
<feature type="disulfide bond" evidence="3 6 8">
    <location>
        <begin position="155"/>
        <end position="414"/>
    </location>
</feature>
<feature type="disulfide bond" evidence="3 6 8">
    <location>
        <begin position="189"/>
        <end position="227"/>
    </location>
</feature>
<feature type="disulfide bond" evidence="3 6 8">
    <location>
        <begin position="193"/>
        <end position="226"/>
    </location>
</feature>
<feature type="disulfide bond" evidence="3 6 8">
    <location>
        <begin position="247"/>
        <end position="273"/>
    </location>
</feature>
<feature type="disulfide bond" evidence="3 6 8">
    <location>
        <begin position="255"/>
        <end position="260"/>
    </location>
</feature>
<feature type="disulfide bond" evidence="3 6 8">
    <location>
        <begin position="278"/>
        <end position="348"/>
    </location>
</feature>
<feature type="disulfide bond" evidence="4 5 7">
    <location>
        <begin position="485"/>
        <end position="502"/>
    </location>
</feature>
<feature type="disulfide bond" evidence="4 5 7">
    <location>
        <begin position="496"/>
        <end position="512"/>
    </location>
</feature>
<feature type="sequence conflict" description="In Ref. 2; AA sequence." evidence="12" ref="2">
    <original>R</original>
    <variation>PP</variation>
    <location>
        <position position="459"/>
    </location>
</feature>
<feature type="strand" evidence="24">
    <location>
        <begin position="19"/>
        <end position="21"/>
    </location>
</feature>
<feature type="strand" evidence="23">
    <location>
        <begin position="30"/>
        <end position="36"/>
    </location>
</feature>
<feature type="strand" evidence="23">
    <location>
        <begin position="42"/>
        <end position="51"/>
    </location>
</feature>
<feature type="helix" evidence="23">
    <location>
        <begin position="53"/>
        <end position="55"/>
    </location>
</feature>
<feature type="strand" evidence="23">
    <location>
        <begin position="58"/>
        <end position="60"/>
    </location>
</feature>
<feature type="strand" evidence="23">
    <location>
        <begin position="66"/>
        <end position="69"/>
    </location>
</feature>
<feature type="turn" evidence="23">
    <location>
        <begin position="75"/>
        <end position="77"/>
    </location>
</feature>
<feature type="helix" evidence="23">
    <location>
        <begin position="81"/>
        <end position="87"/>
    </location>
</feature>
<feature type="strand" evidence="23">
    <location>
        <begin position="88"/>
        <end position="90"/>
    </location>
</feature>
<feature type="helix" evidence="23">
    <location>
        <begin position="95"/>
        <end position="99"/>
    </location>
</feature>
<feature type="strand" evidence="23">
    <location>
        <begin position="101"/>
        <end position="104"/>
    </location>
</feature>
<feature type="strand" evidence="23">
    <location>
        <begin position="107"/>
        <end position="121"/>
    </location>
</feature>
<feature type="strand" evidence="23">
    <location>
        <begin position="123"/>
        <end position="130"/>
    </location>
</feature>
<feature type="strand" evidence="26">
    <location>
        <begin position="136"/>
        <end position="138"/>
    </location>
</feature>
<feature type="strand" evidence="23">
    <location>
        <begin position="142"/>
        <end position="149"/>
    </location>
</feature>
<feature type="strand" evidence="23">
    <location>
        <begin position="157"/>
        <end position="164"/>
    </location>
</feature>
<feature type="turn" evidence="23">
    <location>
        <begin position="168"/>
        <end position="174"/>
    </location>
</feature>
<feature type="helix" evidence="23">
    <location>
        <begin position="182"/>
        <end position="184"/>
    </location>
</feature>
<feature type="strand" evidence="23">
    <location>
        <begin position="198"/>
        <end position="200"/>
    </location>
</feature>
<feature type="strand" evidence="24">
    <location>
        <begin position="203"/>
        <end position="205"/>
    </location>
</feature>
<feature type="strand" evidence="23">
    <location>
        <begin position="222"/>
        <end position="226"/>
    </location>
</feature>
<feature type="strand" evidence="23">
    <location>
        <begin position="229"/>
        <end position="235"/>
    </location>
</feature>
<feature type="strand" evidence="23">
    <location>
        <begin position="240"/>
        <end position="245"/>
    </location>
</feature>
<feature type="strand" evidence="23">
    <location>
        <begin position="247"/>
        <end position="249"/>
    </location>
</feature>
<feature type="strand" evidence="23">
    <location>
        <begin position="253"/>
        <end position="256"/>
    </location>
</feature>
<feature type="helix" evidence="23">
    <location>
        <begin position="257"/>
        <end position="260"/>
    </location>
</feature>
<feature type="turn" evidence="22">
    <location>
        <begin position="262"/>
        <end position="264"/>
    </location>
</feature>
<feature type="strand" evidence="26">
    <location>
        <begin position="265"/>
        <end position="267"/>
    </location>
</feature>
<feature type="strand" evidence="23">
    <location>
        <begin position="268"/>
        <end position="273"/>
    </location>
</feature>
<feature type="strand" evidence="25">
    <location>
        <begin position="278"/>
        <end position="280"/>
    </location>
</feature>
<feature type="turn" evidence="23">
    <location>
        <begin position="282"/>
        <end position="286"/>
    </location>
</feature>
<feature type="strand" evidence="23">
    <location>
        <begin position="290"/>
        <end position="294"/>
    </location>
</feature>
<feature type="strand" evidence="23">
    <location>
        <begin position="297"/>
        <end position="300"/>
    </location>
</feature>
<feature type="strand" evidence="23">
    <location>
        <begin position="305"/>
        <end position="311"/>
    </location>
</feature>
<feature type="strand" evidence="23">
    <location>
        <begin position="317"/>
        <end position="323"/>
    </location>
</feature>
<feature type="strand" evidence="23">
    <location>
        <begin position="326"/>
        <end position="329"/>
    </location>
</feature>
<feature type="strand" evidence="23">
    <location>
        <begin position="333"/>
        <end position="335"/>
    </location>
</feature>
<feature type="strand" evidence="23">
    <location>
        <begin position="338"/>
        <end position="343"/>
    </location>
</feature>
<feature type="helix" evidence="23">
    <location>
        <begin position="345"/>
        <end position="355"/>
    </location>
</feature>
<feature type="helix" evidence="23">
    <location>
        <begin position="359"/>
        <end position="362"/>
    </location>
</feature>
<feature type="helix" evidence="23">
    <location>
        <begin position="365"/>
        <end position="374"/>
    </location>
</feature>
<feature type="strand" evidence="23">
    <location>
        <begin position="375"/>
        <end position="385"/>
    </location>
</feature>
<feature type="turn" evidence="23">
    <location>
        <begin position="387"/>
        <end position="391"/>
    </location>
</feature>
<feature type="helix" evidence="23">
    <location>
        <begin position="392"/>
        <end position="395"/>
    </location>
</feature>
<feature type="strand" evidence="23">
    <location>
        <begin position="396"/>
        <end position="399"/>
    </location>
</feature>
<feature type="strand" evidence="23">
    <location>
        <begin position="412"/>
        <end position="414"/>
    </location>
</feature>
<feature type="helix" evidence="23">
    <location>
        <begin position="421"/>
        <end position="427"/>
    </location>
</feature>
<feature type="strand" evidence="23">
    <location>
        <begin position="432"/>
        <end position="442"/>
    </location>
</feature>
<feature type="turn" evidence="20">
    <location>
        <begin position="479"/>
        <end position="482"/>
    </location>
</feature>
<feature type="strand" evidence="21">
    <location>
        <begin position="483"/>
        <end position="489"/>
    </location>
</feature>
<feature type="strand" evidence="19">
    <location>
        <begin position="498"/>
        <end position="500"/>
    </location>
</feature>
<feature type="strand" evidence="19">
    <location>
        <begin position="502"/>
        <end position="506"/>
    </location>
</feature>
<feature type="strand" evidence="19">
    <location>
        <begin position="509"/>
        <end position="512"/>
    </location>
</feature>
<name>GUX1_HYPJE</name>
<organism>
    <name type="scientific">Hypocrea jecorina</name>
    <name type="common">Trichoderma reesei</name>
    <dbReference type="NCBI Taxonomy" id="51453"/>
    <lineage>
        <taxon>Eukaryota</taxon>
        <taxon>Fungi</taxon>
        <taxon>Dikarya</taxon>
        <taxon>Ascomycota</taxon>
        <taxon>Pezizomycotina</taxon>
        <taxon>Sordariomycetes</taxon>
        <taxon>Hypocreomycetidae</taxon>
        <taxon>Hypocreales</taxon>
        <taxon>Hypocreaceae</taxon>
        <taxon>Trichoderma</taxon>
    </lineage>
</organism>
<sequence>MYRKLAVISAFLATARAQSACTLQSETHPPLTWQKCSSGGTCTQQTGSVVIDANWRWTHATNSSTNCYDGNTWSSTLCPDNETCAKNCCLDGAAYASTYGVTTSGNSLSIGFVTQSAQKNVGARLYLMASDTTYQEFTLLGNEFSFDVDVSQLPCGLNGALYFVSMDADGGVSKYPTNTAGAKYGTGYCDSQCPRDLKFINGQANVEGWEPSSNNANTGIGGHGSCCSEMDIWEANSISEALTPHPCTTVGQEICEGDGCGGTYSDNRYGGTCDPDGCDWNPYRLGNTSFYGPGSSFTLDTTKKLTVVTQFETSGAINRYYVQNGVTFQQPNAELGSYSGNELNDDYCTAEEAEFGGSSFSDKGGLTQFKKATSGGMVLVMSLWDDYYANMLWLDSTYPTNETSSTPGAVRGSCSTSSGVPAQVESQSPNAKVTFSNIKFGPIGSTGNPSGGNPPGGNRGTTTTRRPATTTGSSPGPTQSHYGQCGGIGYSGPTVCASGTTCQVLNPYYSQCL</sequence>
<dbReference type="EC" id="3.2.1.91" evidence="11"/>
<dbReference type="PIR" id="A00902">
    <property type="entry name" value="EUTQI"/>
</dbReference>
<dbReference type="PDB" id="1AZ6">
    <property type="method" value="NMR"/>
    <property type="chains" value="A=478-513"/>
</dbReference>
<dbReference type="PDB" id="1AZH">
    <property type="method" value="NMR"/>
    <property type="chains" value="A=478-513"/>
</dbReference>
<dbReference type="PDB" id="1AZJ">
    <property type="method" value="NMR"/>
    <property type="chains" value="A=478-513"/>
</dbReference>
<dbReference type="PDB" id="1AZK">
    <property type="method" value="NMR"/>
    <property type="chains" value="A=478-513"/>
</dbReference>
<dbReference type="PDB" id="1CBH">
    <property type="method" value="NMR"/>
    <property type="chains" value="A=478-513"/>
</dbReference>
<dbReference type="PDB" id="1CEL">
    <property type="method" value="X-ray"/>
    <property type="resolution" value="1.80 A"/>
    <property type="chains" value="A/B=19-451"/>
</dbReference>
<dbReference type="PDB" id="1DY4">
    <property type="method" value="X-ray"/>
    <property type="resolution" value="1.90 A"/>
    <property type="chains" value="A=19-451"/>
</dbReference>
<dbReference type="PDB" id="1EGN">
    <property type="method" value="X-ray"/>
    <property type="resolution" value="1.60 A"/>
    <property type="chains" value="A=18-451"/>
</dbReference>
<dbReference type="PDB" id="1Q2B">
    <property type="method" value="X-ray"/>
    <property type="resolution" value="1.60 A"/>
    <property type="chains" value="A=18-451"/>
</dbReference>
<dbReference type="PDB" id="1Q2E">
    <property type="method" value="X-ray"/>
    <property type="resolution" value="1.75 A"/>
    <property type="chains" value="A/B=19-451"/>
</dbReference>
<dbReference type="PDB" id="2CBH">
    <property type="method" value="NMR"/>
    <property type="chains" value="A=478-513"/>
</dbReference>
<dbReference type="PDB" id="2CEL">
    <property type="method" value="X-ray"/>
    <property type="resolution" value="2.00 A"/>
    <property type="chains" value="A/B=19-451"/>
</dbReference>
<dbReference type="PDB" id="2MWJ">
    <property type="method" value="NMR"/>
    <property type="chains" value="A=478-513"/>
</dbReference>
<dbReference type="PDB" id="2MWK">
    <property type="method" value="NMR"/>
    <property type="chains" value="A=478-513"/>
</dbReference>
<dbReference type="PDB" id="2V3I">
    <property type="method" value="X-ray"/>
    <property type="resolution" value="1.05 A"/>
    <property type="chains" value="A=19-451"/>
</dbReference>
<dbReference type="PDB" id="2V3R">
    <property type="method" value="X-ray"/>
    <property type="resolution" value="1.60 A"/>
    <property type="chains" value="A=19-451"/>
</dbReference>
<dbReference type="PDB" id="3CEL">
    <property type="method" value="X-ray"/>
    <property type="resolution" value="2.00 A"/>
    <property type="chains" value="A=19-451"/>
</dbReference>
<dbReference type="PDB" id="4C4C">
    <property type="method" value="X-ray"/>
    <property type="resolution" value="1.45 A"/>
    <property type="chains" value="A=19-451"/>
</dbReference>
<dbReference type="PDB" id="4C4D">
    <property type="method" value="X-ray"/>
    <property type="resolution" value="1.32 A"/>
    <property type="chains" value="A=19-451"/>
</dbReference>
<dbReference type="PDB" id="4CEL">
    <property type="method" value="X-ray"/>
    <property type="resolution" value="2.20 A"/>
    <property type="chains" value="A/B=19-451"/>
</dbReference>
<dbReference type="PDB" id="4D5I">
    <property type="method" value="X-ray"/>
    <property type="resolution" value="1.42 A"/>
    <property type="chains" value="A=19-451"/>
</dbReference>
<dbReference type="PDB" id="4D5J">
    <property type="method" value="X-ray"/>
    <property type="resolution" value="1.50 A"/>
    <property type="chains" value="A=19-451"/>
</dbReference>
<dbReference type="PDB" id="4D5O">
    <property type="method" value="X-ray"/>
    <property type="resolution" value="1.52 A"/>
    <property type="chains" value="A=19-451"/>
</dbReference>
<dbReference type="PDB" id="4D5P">
    <property type="method" value="X-ray"/>
    <property type="resolution" value="1.89 A"/>
    <property type="chains" value="A=19-451"/>
</dbReference>
<dbReference type="PDB" id="4D5Q">
    <property type="method" value="X-ray"/>
    <property type="resolution" value="1.68 A"/>
    <property type="chains" value="A=19-451"/>
</dbReference>
<dbReference type="PDB" id="4D5V">
    <property type="method" value="X-ray"/>
    <property type="resolution" value="1.62 A"/>
    <property type="chains" value="A=19-451"/>
</dbReference>
<dbReference type="PDB" id="4P1H">
    <property type="method" value="X-ray"/>
    <property type="resolution" value="1.50 A"/>
    <property type="chains" value="A=19-449"/>
</dbReference>
<dbReference type="PDB" id="4P1J">
    <property type="method" value="X-ray"/>
    <property type="resolution" value="2.62 A"/>
    <property type="chains" value="A=19-451"/>
</dbReference>
<dbReference type="PDB" id="4UWT">
    <property type="method" value="X-ray"/>
    <property type="resolution" value="1.20 A"/>
    <property type="chains" value="A=19-451"/>
</dbReference>
<dbReference type="PDB" id="4V0Z">
    <property type="method" value="X-ray"/>
    <property type="resolution" value="1.70 A"/>
    <property type="chains" value="A=19-451"/>
</dbReference>
<dbReference type="PDB" id="5CEL">
    <property type="method" value="X-ray"/>
    <property type="resolution" value="1.90 A"/>
    <property type="chains" value="A=19-451"/>
</dbReference>
<dbReference type="PDB" id="5OA5">
    <property type="method" value="X-ray"/>
    <property type="resolution" value="2.10 A"/>
    <property type="chains" value="A/B=18-451"/>
</dbReference>
<dbReference type="PDB" id="5X34">
    <property type="method" value="NMR"/>
    <property type="chains" value="A=478-513"/>
</dbReference>
<dbReference type="PDB" id="5X35">
    <property type="method" value="NMR"/>
    <property type="chains" value="A=478-513"/>
</dbReference>
<dbReference type="PDB" id="5X36">
    <property type="method" value="NMR"/>
    <property type="chains" value="A=478-513"/>
</dbReference>
<dbReference type="PDB" id="5X37">
    <property type="method" value="NMR"/>
    <property type="chains" value="A=478-513"/>
</dbReference>
<dbReference type="PDB" id="5X38">
    <property type="method" value="NMR"/>
    <property type="chains" value="A=478-513"/>
</dbReference>
<dbReference type="PDB" id="5X39">
    <property type="method" value="NMR"/>
    <property type="chains" value="A=478-513"/>
</dbReference>
<dbReference type="PDB" id="5X3C">
    <property type="method" value="NMR"/>
    <property type="chains" value="A=478-513"/>
</dbReference>
<dbReference type="PDB" id="6CEL">
    <property type="method" value="X-ray"/>
    <property type="resolution" value="1.70 A"/>
    <property type="chains" value="A=19-451"/>
</dbReference>
<dbReference type="PDB" id="6GRN">
    <property type="method" value="X-ray"/>
    <property type="resolution" value="1.79 A"/>
    <property type="chains" value="A=18-451"/>
</dbReference>
<dbReference type="PDB" id="7CEL">
    <property type="method" value="X-ray"/>
    <property type="resolution" value="1.90 A"/>
    <property type="chains" value="A=19-451"/>
</dbReference>
<dbReference type="PDB" id="7NYT">
    <property type="method" value="X-ray"/>
    <property type="resolution" value="1.09 A"/>
    <property type="chains" value="A=18-451"/>
</dbReference>
<dbReference type="PDB" id="7OC8">
    <property type="method" value="X-ray"/>
    <property type="resolution" value="1.60 A"/>
    <property type="chains" value="A=18-451"/>
</dbReference>
<dbReference type="PDB" id="7YHF">
    <property type="method" value="NMR"/>
    <property type="chains" value="A=478-513"/>
</dbReference>
<dbReference type="PDB" id="7YHG">
    <property type="method" value="NMR"/>
    <property type="chains" value="A=478-513"/>
</dbReference>
<dbReference type="PDB" id="7YHH">
    <property type="method" value="NMR"/>
    <property type="chains" value="A=478-513"/>
</dbReference>
<dbReference type="PDB" id="7YHI">
    <property type="method" value="NMR"/>
    <property type="chains" value="A=478-513"/>
</dbReference>
<dbReference type="PDBsum" id="1AZ6"/>
<dbReference type="PDBsum" id="1AZH"/>
<dbReference type="PDBsum" id="1AZJ"/>
<dbReference type="PDBsum" id="1AZK"/>
<dbReference type="PDBsum" id="1CBH"/>
<dbReference type="PDBsum" id="1CEL"/>
<dbReference type="PDBsum" id="1DY4"/>
<dbReference type="PDBsum" id="1EGN"/>
<dbReference type="PDBsum" id="1Q2B"/>
<dbReference type="PDBsum" id="1Q2E"/>
<dbReference type="PDBsum" id="2CBH"/>
<dbReference type="PDBsum" id="2CEL"/>
<dbReference type="PDBsum" id="2MWJ"/>
<dbReference type="PDBsum" id="2MWK"/>
<dbReference type="PDBsum" id="2V3I"/>
<dbReference type="PDBsum" id="2V3R"/>
<dbReference type="PDBsum" id="3CEL"/>
<dbReference type="PDBsum" id="4C4C"/>
<dbReference type="PDBsum" id="4C4D"/>
<dbReference type="PDBsum" id="4CEL"/>
<dbReference type="PDBsum" id="4D5I"/>
<dbReference type="PDBsum" id="4D5J"/>
<dbReference type="PDBsum" id="4D5O"/>
<dbReference type="PDBsum" id="4D5P"/>
<dbReference type="PDBsum" id="4D5Q"/>
<dbReference type="PDBsum" id="4D5V"/>
<dbReference type="PDBsum" id="4P1H"/>
<dbReference type="PDBsum" id="4P1J"/>
<dbReference type="PDBsum" id="4UWT"/>
<dbReference type="PDBsum" id="4V0Z"/>
<dbReference type="PDBsum" id="5CEL"/>
<dbReference type="PDBsum" id="5OA5"/>
<dbReference type="PDBsum" id="5X34"/>
<dbReference type="PDBsum" id="5X35"/>
<dbReference type="PDBsum" id="5X36"/>
<dbReference type="PDBsum" id="5X37"/>
<dbReference type="PDBsum" id="5X38"/>
<dbReference type="PDBsum" id="5X39"/>
<dbReference type="PDBsum" id="5X3C"/>
<dbReference type="PDBsum" id="6CEL"/>
<dbReference type="PDBsum" id="6GRN"/>
<dbReference type="PDBsum" id="7CEL"/>
<dbReference type="PDBsum" id="7NYT"/>
<dbReference type="PDBsum" id="7OC8"/>
<dbReference type="PDBsum" id="7YHF"/>
<dbReference type="PDBsum" id="7YHG"/>
<dbReference type="PDBsum" id="7YHH"/>
<dbReference type="PDBsum" id="7YHI"/>
<dbReference type="BMRB" id="P62694"/>
<dbReference type="SMR" id="P62694"/>
<dbReference type="CAZy" id="CBM1">
    <property type="family name" value="Carbohydrate-Binding Module Family 1"/>
</dbReference>
<dbReference type="CAZy" id="GH7">
    <property type="family name" value="Glycoside Hydrolase Family 7"/>
</dbReference>
<dbReference type="GlyCosmos" id="P62694">
    <property type="glycosylation" value="15 sites, No reported glycans"/>
</dbReference>
<dbReference type="iPTMnet" id="P62694"/>
<dbReference type="BioCyc" id="MetaCyc:MONOMER-16499"/>
<dbReference type="BRENDA" id="3.2.1.176">
    <property type="organism ID" value="6451"/>
</dbReference>
<dbReference type="BRENDA" id="3.2.1.4">
    <property type="organism ID" value="6451"/>
</dbReference>
<dbReference type="BRENDA" id="3.2.1.91">
    <property type="organism ID" value="6451"/>
</dbReference>
<dbReference type="CD-CODE" id="9321DD1F">
    <property type="entry name" value="Synthetic Condensate 000162"/>
</dbReference>
<dbReference type="EvolutionaryTrace" id="P62694"/>
<dbReference type="GO" id="GO:0005576">
    <property type="term" value="C:extracellular region"/>
    <property type="evidence" value="ECO:0007669"/>
    <property type="project" value="UniProtKB-SubCell"/>
</dbReference>
<dbReference type="GO" id="GO:0016162">
    <property type="term" value="F:cellulose 1,4-beta-cellobiosidase activity"/>
    <property type="evidence" value="ECO:0007669"/>
    <property type="project" value="UniProtKB-EC"/>
</dbReference>
<dbReference type="GO" id="GO:0030248">
    <property type="term" value="F:cellulose binding"/>
    <property type="evidence" value="ECO:0007669"/>
    <property type="project" value="InterPro"/>
</dbReference>
<dbReference type="GO" id="GO:0030245">
    <property type="term" value="P:cellulose catabolic process"/>
    <property type="evidence" value="ECO:0007669"/>
    <property type="project" value="UniProtKB-KW"/>
</dbReference>
<dbReference type="CDD" id="cd07999">
    <property type="entry name" value="GH7_CBH_EG"/>
    <property type="match status" value="1"/>
</dbReference>
<dbReference type="FunFam" id="2.70.100.10:FF:000001">
    <property type="entry name" value="Glucanase"/>
    <property type="match status" value="1"/>
</dbReference>
<dbReference type="Gene3D" id="2.70.100.10">
    <property type="entry name" value="Glycoside hydrolase, family 7, domain"/>
    <property type="match status" value="1"/>
</dbReference>
<dbReference type="InterPro" id="IPR035971">
    <property type="entry name" value="CBD_sf"/>
</dbReference>
<dbReference type="InterPro" id="IPR000254">
    <property type="entry name" value="Cellulose-bd_dom_fun"/>
</dbReference>
<dbReference type="InterPro" id="IPR013320">
    <property type="entry name" value="ConA-like_dom_sf"/>
</dbReference>
<dbReference type="InterPro" id="IPR001722">
    <property type="entry name" value="Glyco_hydro_7"/>
</dbReference>
<dbReference type="InterPro" id="IPR037019">
    <property type="entry name" value="Glyco_hydro_7_sf"/>
</dbReference>
<dbReference type="PANTHER" id="PTHR33753">
    <property type="entry name" value="1,4-BETA-D-GLUCAN CELLOBIOHYDROLASE B"/>
    <property type="match status" value="1"/>
</dbReference>
<dbReference type="PANTHER" id="PTHR33753:SF2">
    <property type="entry name" value="GLYCOSIDE HYDROLASE FAMILY 7 PROTEIN"/>
    <property type="match status" value="1"/>
</dbReference>
<dbReference type="Pfam" id="PF00734">
    <property type="entry name" value="CBM_1"/>
    <property type="match status" value="1"/>
</dbReference>
<dbReference type="Pfam" id="PF00840">
    <property type="entry name" value="Glyco_hydro_7"/>
    <property type="match status" value="1"/>
</dbReference>
<dbReference type="PRINTS" id="PR00734">
    <property type="entry name" value="GLHYDRLASE7"/>
</dbReference>
<dbReference type="SMART" id="SM00236">
    <property type="entry name" value="fCBD"/>
    <property type="match status" value="1"/>
</dbReference>
<dbReference type="SUPFAM" id="SSF57180">
    <property type="entry name" value="Cellulose-binding domain"/>
    <property type="match status" value="1"/>
</dbReference>
<dbReference type="SUPFAM" id="SSF49899">
    <property type="entry name" value="Concanavalin A-like lectins/glucanases"/>
    <property type="match status" value="1"/>
</dbReference>
<dbReference type="PROSITE" id="PS00562">
    <property type="entry name" value="CBM1_1"/>
    <property type="match status" value="1"/>
</dbReference>
<dbReference type="PROSITE" id="PS51164">
    <property type="entry name" value="CBM1_2"/>
    <property type="match status" value="1"/>
</dbReference>
<evidence type="ECO:0000255" key="1">
    <source>
        <dbReference type="PROSITE-ProRule" id="PRU00597"/>
    </source>
</evidence>
<evidence type="ECO:0000256" key="2">
    <source>
        <dbReference type="SAM" id="MobiDB-lite"/>
    </source>
</evidence>
<evidence type="ECO:0000269" key="3">
    <source>
    </source>
</evidence>
<evidence type="ECO:0000269" key="4">
    <source>
    </source>
</evidence>
<evidence type="ECO:0000269" key="5">
    <source>
    </source>
</evidence>
<evidence type="ECO:0000269" key="6">
    <source>
    </source>
</evidence>
<evidence type="ECO:0000269" key="7">
    <source>
    </source>
</evidence>
<evidence type="ECO:0000269" key="8">
    <source>
    </source>
</evidence>
<evidence type="ECO:0000269" key="9">
    <source>
    </source>
</evidence>
<evidence type="ECO:0000269" key="10">
    <source ref="3"/>
</evidence>
<evidence type="ECO:0000269" key="11">
    <source ref="4"/>
</evidence>
<evidence type="ECO:0000305" key="12"/>
<evidence type="ECO:0000305" key="13">
    <source>
    </source>
</evidence>
<evidence type="ECO:0000305" key="14">
    <source>
    </source>
</evidence>
<evidence type="ECO:0000305" key="15">
    <source>
    </source>
</evidence>
<evidence type="ECO:0007744" key="16">
    <source>
        <dbReference type="PDB" id="1EGN"/>
    </source>
</evidence>
<evidence type="ECO:0007744" key="17">
    <source>
        <dbReference type="PDB" id="1Q2B"/>
    </source>
</evidence>
<evidence type="ECO:0007744" key="18">
    <source>
        <dbReference type="PDB" id="1Q2E"/>
    </source>
</evidence>
<evidence type="ECO:0007829" key="19">
    <source>
        <dbReference type="PDB" id="1AZ6"/>
    </source>
</evidence>
<evidence type="ECO:0007829" key="20">
    <source>
        <dbReference type="PDB" id="1AZH"/>
    </source>
</evidence>
<evidence type="ECO:0007829" key="21">
    <source>
        <dbReference type="PDB" id="1AZJ"/>
    </source>
</evidence>
<evidence type="ECO:0007829" key="22">
    <source>
        <dbReference type="PDB" id="1Q2B"/>
    </source>
</evidence>
<evidence type="ECO:0007829" key="23">
    <source>
        <dbReference type="PDB" id="2V3I"/>
    </source>
</evidence>
<evidence type="ECO:0007829" key="24">
    <source>
        <dbReference type="PDB" id="4P1J"/>
    </source>
</evidence>
<evidence type="ECO:0007829" key="25">
    <source>
        <dbReference type="PDB" id="5OA5"/>
    </source>
</evidence>
<evidence type="ECO:0007829" key="26">
    <source>
        <dbReference type="PDB" id="7NYT"/>
    </source>
</evidence>
<proteinExistence type="evidence at protein level"/>
<gene>
    <name type="primary">cbh1</name>
</gene>
<accession>P62694</accession>
<accession>P00725</accession>
<keyword id="KW-0002">3D-structure</keyword>
<keyword id="KW-0119">Carbohydrate metabolism</keyword>
<keyword id="KW-0136">Cellulose degradation</keyword>
<keyword id="KW-0903">Direct protein sequencing</keyword>
<keyword id="KW-1015">Disulfide bond</keyword>
<keyword id="KW-0325">Glycoprotein</keyword>
<keyword id="KW-0326">Glycosidase</keyword>
<keyword id="KW-0378">Hydrolase</keyword>
<keyword id="KW-0624">Polysaccharide degradation</keyword>
<keyword id="KW-0873">Pyrrolidone carboxylic acid</keyword>
<keyword id="KW-0964">Secreted</keyword>
<keyword id="KW-0732">Signal</keyword>
<reference key="1">
    <citation type="journal article" date="1983" name="Biotechnology (N.Y.)">
        <title>Molecular cloning of exo-cellobiohydrolase I derived from Trichoderma reesei strain L27.</title>
        <authorList>
            <person name="Shoemaker S."/>
            <person name="Schweickart V."/>
            <person name="Ladner M."/>
            <person name="Gelfand D."/>
            <person name="Kwok S."/>
            <person name="Myambo K."/>
            <person name="Innis M."/>
        </authorList>
    </citation>
    <scope>NUCLEOTIDE SEQUENCE [GENOMIC DNA / MRNA]</scope>
    <source>
        <strain>L27</strain>
    </source>
</reference>
<reference key="2">
    <citation type="thesis" date="1981" institute="University of Uppsala" country="Sweden">
        <title>Cellulases from Trichoderma reesei QM 9414: enzymatic and structural properties.</title>
        <authorList>
            <person name="Faegerstam L.G."/>
        </authorList>
    </citation>
    <scope>PROTEIN SEQUENCE</scope>
    <source>
        <strain>ATCC 26921 / CBS 392.92 / QM9414</strain>
    </source>
</reference>
<reference key="3">
    <citation type="journal article" date="1980" name="FEBS Lett.">
        <title>The 1,4-beta-glucan cellobiohydrolases of Trichoderma reesei QM 9414.</title>
        <authorList>
            <person name="Faegerstam L.G."/>
            <person name="Pettersson L.G."/>
        </authorList>
    </citation>
    <scope>PROTEIN SEQUENCE OF 18-37</scope>
    <scope>PYROGLUTAMATE FORMATION AT GLN-18</scope>
    <source>
        <strain>ATCC 26921 / CBS 392.92 / QM9414</strain>
    </source>
</reference>
<reference key="4">
    <citation type="journal article" date="1983" name="Biotechnology (N.Y.)">
        <title>Characterization and properties of cellulases purified from Trichoderma reesei strain L27.</title>
        <authorList>
            <person name="Shoemaker S."/>
            <person name="Watt K."/>
            <person name="Tsitovsky G."/>
            <person name="Cox R."/>
        </authorList>
    </citation>
    <scope>PROTEIN SEQUENCE OF 18-48</scope>
    <scope>PYROGLUTAMATE FORMATION AT GLN-18</scope>
    <scope>FUNCTION</scope>
    <scope>SUBCELLULAR LOCATION</scope>
    <source>
        <strain>L27</strain>
    </source>
</reference>
<reference key="5">
    <citation type="journal article" date="1998" name="Eur. J. Biochem.">
        <title>Modified glycosylation of cellobiohydrolase I from a high cellulase-producing mutant strain of Trichoderma reesei.</title>
        <authorList>
            <person name="Harrison M.J."/>
            <person name="Nouwens A.S."/>
            <person name="Jardine D.R."/>
            <person name="Zachara N.E."/>
            <person name="Gooley A.A."/>
            <person name="Nevalainen H."/>
            <person name="Packer N.H."/>
        </authorList>
    </citation>
    <scope>PROTEIN SEQUENCE OF 57-64; 285-289 AND 382-396</scope>
    <scope>GLYCOSYLATION AT ASN-62; ASN-287; ASN-401; THR-461; THR-462; THR-463; THR-464; THR-469; THR-470; THR-471; SER-473; SER-474; THR-478 AND SER-480</scope>
    <source>
        <strain>ALKO2877</strain>
    </source>
</reference>
<reference key="6">
    <citation type="journal article" date="1989" name="FEBS Lett.">
        <title>Identification of a functionally important carboxyl group in cellobiohydrolase I from Trichoderma reesei.</title>
        <authorList>
            <person name="Tomme P."/>
            <person name="Clayssens M."/>
        </authorList>
    </citation>
    <scope>PROTEIN SEQUENCE OF 141-151</scope>
    <source>
        <strain>ATCC 26921 / CBS 392.92 / QM9414</strain>
    </source>
</reference>
<reference key="7">
    <citation type="journal article" date="1989" name="Biochemistry">
        <title>Determination of the three-dimensional solution structure of the C-terminal domain of cellobiohydrolase I from Trichoderma reesei. A study using nuclear magnetic resonance and hybrid distance geometry-dynamical simulated annealing.</title>
        <authorList>
            <person name="Kraulis P.J."/>
            <person name="Clore G.M."/>
            <person name="Nilges M."/>
            <person name="Jones T.A."/>
            <person name="Pettersson G."/>
            <person name="Knowles J."/>
            <person name="Gronenborn A.M."/>
        </authorList>
    </citation>
    <scope>STRUCTURE BY NMR OF 478-513</scope>
    <scope>DISULFIDE BONDS</scope>
</reference>
<reference key="8">
    <citation type="journal article" date="1994" name="Science">
        <title>The three-dimensional crystal structure of the catalytic core of cellobiohydrolase I from Trichoderma reesei.</title>
        <authorList>
            <person name="Divne C."/>
            <person name="Staahlberg J."/>
            <person name="Reinikainen T."/>
            <person name="Ruohonen L."/>
            <person name="Pettersson G."/>
            <person name="Knowles J.K.C."/>
            <person name="Teeri T.T."/>
            <person name="Jones T.A."/>
        </authorList>
    </citation>
    <scope>X-RAY CRYSTALLOGRAPHY (1.81 ANGSTROMS) OF 18-452</scope>
    <scope>GLYCOSYLATION AT ASN-287</scope>
    <scope>DISULFIDE BONDS</scope>
</reference>
<reference key="9">
    <citation type="journal article" date="1997" name="Protein Sci.">
        <title>Three-dimensional structures of three engineered cellulose-binding domains of cellobiohydrolase I from Trichoderma reesei.</title>
        <authorList>
            <person name="Mattinen M.L."/>
            <person name="Kontteli M."/>
            <person name="Kerovuo J."/>
            <person name="Linder M."/>
            <person name="Annila A."/>
            <person name="Lindeberg G."/>
            <person name="Reinikainen T."/>
            <person name="Drakenberg T."/>
        </authorList>
    </citation>
    <scope>STRUCTURE BY NMR OF 478-513</scope>
    <scope>DISULFIDE BONDS</scope>
</reference>
<reference key="10">
    <citation type="journal article" date="1998" name="J. Mol. Biol.">
        <title>High-resolution crystal structures reveal how a cellulose chain is bound in the 50 A long tunnel of cellobiohydrolase I from Trichoderma reesei.</title>
        <authorList>
            <person name="Divne C."/>
            <person name="Staahlberg J."/>
            <person name="Teeri T.T."/>
            <person name="Jones T.A."/>
        </authorList>
    </citation>
    <scope>X-RAY CRYSTALLOGRAPHY (1.7 ANGSTROMS) OF 18-452</scope>
    <scope>GLYCOSYLATION AT ASN-287 AND ASN-401</scope>
    <scope>DISULFIDE BONDS</scope>
    <source>
        <strain>ATCC 26921 / CBS 392.92 / QM9414</strain>
    </source>
</reference>
<reference key="11">
    <citation type="journal article" date="2014" name="J. Am. Chem. Soc.">
        <title>The mechanism of cellulose hydrolysis by a two-step, retaining cellobiohydrolase elucidated by structural and transition path sampling studies.</title>
        <authorList>
            <person name="Knott B.C."/>
            <person name="Haddad Momeni M."/>
            <person name="Crowley M.F."/>
            <person name="Mackenzie L.F."/>
            <person name="Gotz A.W."/>
            <person name="Sandgren M."/>
            <person name="Withers S.G."/>
            <person name="Stahlberg J."/>
            <person name="Beckham G.T."/>
        </authorList>
    </citation>
    <scope>X-RAY CRYSTALLOGRAPHY (1.32 ANGSTROMS) OF 18-451</scope>
    <scope>GLYCOSYLATION AT ASN-287 AND ASN-401</scope>
    <scope>DISULFIDE BONDS</scope>
    <scope>ACTIVE SITE</scope>
    <scope>REACTION MECHANISM</scope>
</reference>
<reference key="12">
    <citation type="journal article" date="2015" name="FEBS J.">
        <title>O-glycosylation effects on family 1 carbohydrate-binding module solution structures.</title>
        <authorList>
            <person name="Happs R.M."/>
            <person name="Guan X."/>
            <person name="Resch M.G."/>
            <person name="Davis M.F."/>
            <person name="Beckham G.T."/>
            <person name="Tan Z."/>
            <person name="Crowley M.F."/>
        </authorList>
    </citation>
    <scope>STRUCTURE BY NMR OF 478-513</scope>
    <scope>GLYCOSYLATION AT THR-478; SER-480 AND SER-491</scope>
    <scope>DISULFIDE BONDS</scope>
</reference>
<protein>
    <recommendedName>
        <fullName>Exoglucanase 1</fullName>
        <ecNumber evidence="11">3.2.1.91</ecNumber>
    </recommendedName>
    <alternativeName>
        <fullName>1,4-beta-cellobiohydrolase</fullName>
    </alternativeName>
    <alternativeName>
        <fullName>Cellobiohydrolase 7A</fullName>
        <shortName>Cel7A</shortName>
    </alternativeName>
    <alternativeName>
        <fullName>Exocellobiohydrolase I</fullName>
        <shortName>CBHI</shortName>
    </alternativeName>
    <alternativeName>
        <fullName>Exoglucanase I</fullName>
    </alternativeName>
</protein>